<organism>
    <name type="scientific">Candida tropicalis (strain ATCC MYA-3404 / T1)</name>
    <name type="common">Yeast</name>
    <dbReference type="NCBI Taxonomy" id="294747"/>
    <lineage>
        <taxon>Eukaryota</taxon>
        <taxon>Fungi</taxon>
        <taxon>Dikarya</taxon>
        <taxon>Ascomycota</taxon>
        <taxon>Saccharomycotina</taxon>
        <taxon>Pichiomycetes</taxon>
        <taxon>Debaryomycetaceae</taxon>
        <taxon>Candida/Lodderomyces clade</taxon>
        <taxon>Candida</taxon>
    </lineage>
</organism>
<dbReference type="EMBL" id="GG692398">
    <property type="protein sequence ID" value="EER32959.1"/>
    <property type="molecule type" value="Genomic_DNA"/>
</dbReference>
<dbReference type="RefSeq" id="XP_002549087.1">
    <property type="nucleotide sequence ID" value="XM_002549041.1"/>
</dbReference>
<dbReference type="SMR" id="C5MBE2"/>
<dbReference type="STRING" id="294747.C5MBE2"/>
<dbReference type="EnsemblFungi" id="CTRG_03384-t43_1">
    <property type="protein sequence ID" value="CTRG_03384-t43_1-p1"/>
    <property type="gene ID" value="CTRG_03384"/>
</dbReference>
<dbReference type="GeneID" id="8301979"/>
<dbReference type="KEGG" id="ctp:CTRG_03384"/>
<dbReference type="VEuPathDB" id="FungiDB:CTRG_03384"/>
<dbReference type="eggNOG" id="ENOG502QW0H">
    <property type="taxonomic scope" value="Eukaryota"/>
</dbReference>
<dbReference type="HOGENOM" id="CLU_066477_0_0_1"/>
<dbReference type="OrthoDB" id="4097053at2759"/>
<dbReference type="Proteomes" id="UP000002037">
    <property type="component" value="Unassembled WGS sequence"/>
</dbReference>
<dbReference type="GO" id="GO:0005789">
    <property type="term" value="C:endoplasmic reticulum membrane"/>
    <property type="evidence" value="ECO:0007669"/>
    <property type="project" value="UniProtKB-SubCell"/>
</dbReference>
<dbReference type="GO" id="GO:0043529">
    <property type="term" value="C:GET complex"/>
    <property type="evidence" value="ECO:0007669"/>
    <property type="project" value="UniProtKB-UniRule"/>
</dbReference>
<dbReference type="GO" id="GO:0000139">
    <property type="term" value="C:Golgi membrane"/>
    <property type="evidence" value="ECO:0007669"/>
    <property type="project" value="UniProtKB-SubCell"/>
</dbReference>
<dbReference type="GO" id="GO:0045048">
    <property type="term" value="P:protein insertion into ER membrane"/>
    <property type="evidence" value="ECO:0007669"/>
    <property type="project" value="UniProtKB-UniRule"/>
</dbReference>
<dbReference type="GO" id="GO:0006890">
    <property type="term" value="P:retrograde vesicle-mediated transport, Golgi to endoplasmic reticulum"/>
    <property type="evidence" value="ECO:0007669"/>
    <property type="project" value="TreeGrafter"/>
</dbReference>
<dbReference type="HAMAP" id="MF_03114">
    <property type="entry name" value="Get2"/>
    <property type="match status" value="1"/>
</dbReference>
<dbReference type="InterPro" id="IPR014802">
    <property type="entry name" value="GET2"/>
</dbReference>
<dbReference type="InterPro" id="IPR028143">
    <property type="entry name" value="Get2/sif1"/>
</dbReference>
<dbReference type="PANTHER" id="PTHR28263">
    <property type="entry name" value="GOLGI TO ER TRAFFIC PROTEIN 2"/>
    <property type="match status" value="1"/>
</dbReference>
<dbReference type="PANTHER" id="PTHR28263:SF1">
    <property type="entry name" value="GOLGI TO ER TRAFFIC PROTEIN 2"/>
    <property type="match status" value="1"/>
</dbReference>
<dbReference type="Pfam" id="PF08690">
    <property type="entry name" value="GET2"/>
    <property type="match status" value="1"/>
</dbReference>
<comment type="function">
    <text evidence="1">Required for the post-translational delivery of tail-anchored (TA) proteins to the endoplasmic reticulum. Together with GET1, acts as a membrane receptor for soluble GET3, which recognizes and selectively binds the transmembrane domain of TA proteins in the cytosol. The GET complex cooperates with the HDEL receptor ERD2 to mediate the ATP-dependent retrieval of resident ER proteins that contain a C-terminal H-D-E-L retention signal from the Golgi to the ER.</text>
</comment>
<comment type="subunit">
    <text evidence="1">Component of the Golgi to ER traffic (GET) complex, which is composed of GET1, GET2 and GET3. Within the complex, GET1 and GET2 form a heterotetramer which is stabilized by phosphatidylinositol binding and which binds to the GET3 homodimer.</text>
</comment>
<comment type="subcellular location">
    <subcellularLocation>
        <location evidence="1">Endoplasmic reticulum membrane</location>
        <topology evidence="1">Multi-pass membrane protein</topology>
    </subcellularLocation>
    <subcellularLocation>
        <location evidence="1">Golgi apparatus membrane</location>
        <topology evidence="1">Multi-pass membrane protein</topology>
    </subcellularLocation>
</comment>
<comment type="similarity">
    <text evidence="1">Belongs to the GET2 family.</text>
</comment>
<keyword id="KW-0256">Endoplasmic reticulum</keyword>
<keyword id="KW-0931">ER-Golgi transport</keyword>
<keyword id="KW-0333">Golgi apparatus</keyword>
<keyword id="KW-0472">Membrane</keyword>
<keyword id="KW-1185">Reference proteome</keyword>
<keyword id="KW-0812">Transmembrane</keyword>
<keyword id="KW-1133">Transmembrane helix</keyword>
<keyword id="KW-0813">Transport</keyword>
<reference key="1">
    <citation type="journal article" date="2009" name="Nature">
        <title>Evolution of pathogenicity and sexual reproduction in eight Candida genomes.</title>
        <authorList>
            <person name="Butler G."/>
            <person name="Rasmussen M.D."/>
            <person name="Lin M.F."/>
            <person name="Santos M.A.S."/>
            <person name="Sakthikumar S."/>
            <person name="Munro C.A."/>
            <person name="Rheinbay E."/>
            <person name="Grabherr M."/>
            <person name="Forche A."/>
            <person name="Reedy J.L."/>
            <person name="Agrafioti I."/>
            <person name="Arnaud M.B."/>
            <person name="Bates S."/>
            <person name="Brown A.J.P."/>
            <person name="Brunke S."/>
            <person name="Costanzo M.C."/>
            <person name="Fitzpatrick D.A."/>
            <person name="de Groot P.W.J."/>
            <person name="Harris D."/>
            <person name="Hoyer L.L."/>
            <person name="Hube B."/>
            <person name="Klis F.M."/>
            <person name="Kodira C."/>
            <person name="Lennard N."/>
            <person name="Logue M.E."/>
            <person name="Martin R."/>
            <person name="Neiman A.M."/>
            <person name="Nikolaou E."/>
            <person name="Quail M.A."/>
            <person name="Quinn J."/>
            <person name="Santos M.C."/>
            <person name="Schmitzberger F.F."/>
            <person name="Sherlock G."/>
            <person name="Shah P."/>
            <person name="Silverstein K.A.T."/>
            <person name="Skrzypek M.S."/>
            <person name="Soll D."/>
            <person name="Staggs R."/>
            <person name="Stansfield I."/>
            <person name="Stumpf M.P.H."/>
            <person name="Sudbery P.E."/>
            <person name="Srikantha T."/>
            <person name="Zeng Q."/>
            <person name="Berman J."/>
            <person name="Berriman M."/>
            <person name="Heitman J."/>
            <person name="Gow N.A.R."/>
            <person name="Lorenz M.C."/>
            <person name="Birren B.W."/>
            <person name="Kellis M."/>
            <person name="Cuomo C.A."/>
        </authorList>
    </citation>
    <scope>NUCLEOTIDE SEQUENCE [LARGE SCALE GENOMIC DNA]</scope>
    <source>
        <strain>ATCC MYA-3404 / T1</strain>
    </source>
</reference>
<feature type="chain" id="PRO_0000388629" description="Golgi to ER traffic protein 2">
    <location>
        <begin position="1"/>
        <end position="307"/>
    </location>
</feature>
<feature type="topological domain" description="Cytoplasmic" evidence="1">
    <location>
        <begin position="1"/>
        <end position="173"/>
    </location>
</feature>
<feature type="transmembrane region" description="Helical" evidence="1">
    <location>
        <begin position="174"/>
        <end position="194"/>
    </location>
</feature>
<feature type="topological domain" description="Lumenal" evidence="1">
    <location>
        <begin position="195"/>
        <end position="220"/>
    </location>
</feature>
<feature type="transmembrane region" description="Helical" evidence="1">
    <location>
        <begin position="221"/>
        <end position="240"/>
    </location>
</feature>
<feature type="topological domain" description="Cytoplasmic" evidence="1">
    <location>
        <begin position="241"/>
        <end position="284"/>
    </location>
</feature>
<feature type="transmembrane region" description="Helical" evidence="1">
    <location>
        <begin position="285"/>
        <end position="305"/>
    </location>
</feature>
<feature type="topological domain" description="Lumenal" evidence="1">
    <location>
        <begin position="306"/>
        <end position="307"/>
    </location>
</feature>
<feature type="region of interest" description="Disordered" evidence="2">
    <location>
        <begin position="41"/>
        <end position="73"/>
    </location>
</feature>
<feature type="compositionally biased region" description="Polar residues" evidence="2">
    <location>
        <begin position="41"/>
        <end position="52"/>
    </location>
</feature>
<accession>C5MBE2</accession>
<name>GET2_CANTT</name>
<gene>
    <name evidence="1" type="primary">GET2</name>
    <name type="ORF">CTRG_03384</name>
</gene>
<protein>
    <recommendedName>
        <fullName evidence="1">Golgi to ER traffic protein 2</fullName>
    </recommendedName>
</protein>
<evidence type="ECO:0000255" key="1">
    <source>
        <dbReference type="HAMAP-Rule" id="MF_03114"/>
    </source>
</evidence>
<evidence type="ECO:0000256" key="2">
    <source>
        <dbReference type="SAM" id="MobiDB-lite"/>
    </source>
</evidence>
<proteinExistence type="inferred from homology"/>
<sequence>MSDSTDSPAVLSAEEKRRLLRERRQAKMAKGQATDRLNNILSQGSSVKTTGVKSVLDEPQPTATSSAIHDEDPDIQDISEIASPPPPTPPIGEGSPENIDDIFQKMLQQQVQGKDGKVDPNDPIVQIMNMFKDGSGADGPQEGDVNANEFSNDPVENKYQQDLQAYDTYQQKLWKSRFLVIRVVVTLFNFFYHYLNVPSFHASNYSYVRDLAQDEFPVRNFFTWFAAFEVIIVLQYYTVFHKLGLFHAANQNSMIMKLMSMGSMVLPQLNTYQPLVARFLGYYELFGIIFGDLSLVIVLFGLLSFTK</sequence>